<reference key="1">
    <citation type="journal article" date="1996" name="J. Biol. Chem.">
        <title>Molecular cloning of human phosphomevalonate kinase and identification of a consensus peroxisomal targeting sequence.</title>
        <authorList>
            <person name="Chambliss K.L."/>
            <person name="Slaughter C.A."/>
            <person name="Schreiner R."/>
            <person name="Hoffmann G.F."/>
            <person name="Gibson K.M."/>
        </authorList>
    </citation>
    <scope>NUCLEOTIDE SEQUENCE [MRNA]</scope>
    <scope>CATALYTIC ACTIVITY</scope>
    <scope>TISSUE SPECIFICITY</scope>
    <scope>FUNCTION</scope>
    <source>
        <tissue>Liver</tissue>
    </source>
</reference>
<reference key="2">
    <citation type="submission" date="2004-10" db="EMBL/GenBank/DDBJ databases">
        <title>Cloning of human full-length CDSs in BD Creator(TM) system donor vector.</title>
        <authorList>
            <person name="Kalnine N."/>
            <person name="Chen X."/>
            <person name="Rolfs A."/>
            <person name="Halleck A."/>
            <person name="Hines L."/>
            <person name="Eisenstein S."/>
            <person name="Koundinya M."/>
            <person name="Raphael J."/>
            <person name="Moreira D."/>
            <person name="Kelley T."/>
            <person name="LaBaer J."/>
            <person name="Lin Y."/>
            <person name="Phelan M."/>
            <person name="Farmer A."/>
        </authorList>
    </citation>
    <scope>NUCLEOTIDE SEQUENCE [LARGE SCALE MRNA]</scope>
    <scope>VARIANT MET-125</scope>
</reference>
<reference key="3">
    <citation type="journal article" date="2004" name="Genome Res.">
        <title>The status, quality, and expansion of the NIH full-length cDNA project: the Mammalian Gene Collection (MGC).</title>
        <authorList>
            <consortium name="The MGC Project Team"/>
        </authorList>
    </citation>
    <scope>NUCLEOTIDE SEQUENCE [LARGE SCALE MRNA]</scope>
    <source>
        <tissue>Skin</tissue>
        <tissue>Uterus</tissue>
    </source>
</reference>
<reference key="4">
    <citation type="journal article" date="1999" name="J. Lipid Res.">
        <title>Characterization of phosphomevalonate kinase: chromosomal localization, regulation, and subcellular targeting.</title>
        <authorList>
            <person name="Olivier L.M."/>
            <person name="Chambliss K.L."/>
            <person name="Gibson K.M."/>
            <person name="Krisans S.K."/>
        </authorList>
    </citation>
    <scope>NUCLEOTIDE SEQUENCE [GENOMIC DNA] OF 33-192</scope>
    <scope>INDUCTION</scope>
</reference>
<reference key="5">
    <citation type="journal article" date="1997" name="J. Lipid Res.">
        <title>Post-translational regulation of mevalonate kinase by intermediates of the cholesterol and nonsterol isoprene biosynthetic pathways.</title>
        <authorList>
            <person name="Hinson D.D."/>
            <person name="Chambliss K.L."/>
            <person name="Toth M.J."/>
            <person name="Tanaka R.D."/>
            <person name="Gibson K.M."/>
        </authorList>
    </citation>
    <scope>CATALYTIC ACTIVITY</scope>
    <scope>FUNCTION</scope>
    <scope>BIOPHYSICOCHEMICAL PROPERTIES</scope>
</reference>
<reference key="6">
    <citation type="journal article" date="2004" name="J. Lipid Res.">
        <title>Phosphomevalonate kinase is a cytosolic protein in humans.</title>
        <authorList>
            <person name="Hogenboom S."/>
            <person name="Tuyp J.J."/>
            <person name="Espeel M."/>
            <person name="Koster J."/>
            <person name="Wanders R.J."/>
            <person name="Waterham H.R."/>
        </authorList>
    </citation>
    <scope>SUBCELLULAR LOCATION</scope>
</reference>
<reference key="7">
    <citation type="journal article" date="2006" name="Biochemistry">
        <title>Phosphomevalonate kinase: functional investigation of the recombinant human enzyme.</title>
        <authorList>
            <person name="Herdendorf T.J."/>
            <person name="Miziorko H.M."/>
        </authorList>
    </citation>
    <scope>FUNCTION</scope>
    <scope>MUTAGENESIS OF LYS-17; ARG-18; LYS-19; LYS-22 AND ASP-23</scope>
    <scope>BIOPHYSICOCHEMICAL PROPERTIES</scope>
    <scope>ATP-BINDING</scope>
    <scope>CATALYTIC ACTIVITY</scope>
    <scope>SUBUNIT</scope>
</reference>
<reference key="8">
    <citation type="journal article" date="2007" name="Biochemistry">
        <title>Functional evaluation of conserved basic residues in human phosphomevalonate kinase.</title>
        <authorList>
            <person name="Herdendorf T.J."/>
            <person name="Miziorko H.M."/>
        </authorList>
    </citation>
    <scope>FUNCTION</scope>
    <scope>MUTAGENESIS OF LYS-48; LYS-69; ARG-73; ARG-84; ARG-110; ARG-111 AND ARG-141</scope>
    <scope>ATP-BINDING</scope>
    <scope>CATALYTIC ACTIVITY</scope>
</reference>
<reference key="9">
    <citation type="journal article" date="2011" name="BMC Syst. Biol.">
        <title>Initial characterization of the human central proteome.</title>
        <authorList>
            <person name="Burkard T.R."/>
            <person name="Planyavsky M."/>
            <person name="Kaupe I."/>
            <person name="Breitwieser F.P."/>
            <person name="Buerckstuemmer T."/>
            <person name="Bennett K.L."/>
            <person name="Superti-Furga G."/>
            <person name="Colinge J."/>
        </authorList>
    </citation>
    <scope>IDENTIFICATION BY MASS SPECTROMETRY [LARGE SCALE ANALYSIS]</scope>
</reference>
<reference key="10">
    <citation type="journal article" date="2012" name="Proc. Natl. Acad. Sci. U.S.A.">
        <title>N-terminal acetylome analyses and functional insights of the N-terminal acetyltransferase NatB.</title>
        <authorList>
            <person name="Van Damme P."/>
            <person name="Lasa M."/>
            <person name="Polevoda B."/>
            <person name="Gazquez C."/>
            <person name="Elosegui-Artola A."/>
            <person name="Kim D.S."/>
            <person name="De Juan-Pardo E."/>
            <person name="Demeyer K."/>
            <person name="Hole K."/>
            <person name="Larrea E."/>
            <person name="Timmerman E."/>
            <person name="Prieto J."/>
            <person name="Arnesen T."/>
            <person name="Sherman F."/>
            <person name="Gevaert K."/>
            <person name="Aldabe R."/>
        </authorList>
    </citation>
    <scope>IDENTIFICATION BY MASS SPECTROMETRY [LARGE SCALE ANALYSIS]</scope>
</reference>
<reference key="11">
    <citation type="journal article" date="2014" name="J. Proteomics">
        <title>An enzyme assisted RP-RPLC approach for in-depth analysis of human liver phosphoproteome.</title>
        <authorList>
            <person name="Bian Y."/>
            <person name="Song C."/>
            <person name="Cheng K."/>
            <person name="Dong M."/>
            <person name="Wang F."/>
            <person name="Huang J."/>
            <person name="Sun D."/>
            <person name="Wang L."/>
            <person name="Ye M."/>
            <person name="Zou H."/>
        </authorList>
    </citation>
    <scope>IDENTIFICATION BY MASS SPECTROMETRY [LARGE SCALE ANALYSIS]</scope>
    <source>
        <tissue>Liver</tissue>
    </source>
</reference>
<reference key="12">
    <citation type="journal article" date="2015" name="Proteomics">
        <title>N-terminome analysis of the human mitochondrial proteome.</title>
        <authorList>
            <person name="Vaca Jacome A.S."/>
            <person name="Rabilloud T."/>
            <person name="Schaeffer-Reiss C."/>
            <person name="Rompais M."/>
            <person name="Ayoub D."/>
            <person name="Lane L."/>
            <person name="Bairoch A."/>
            <person name="Van Dorsselaer A."/>
            <person name="Carapito C."/>
        </authorList>
    </citation>
    <scope>IDENTIFICATION BY MASS SPECTROMETRY [LARGE SCALE ANALYSIS]</scope>
</reference>
<reference key="13">
    <citation type="journal article" date="2008" name="Proteins">
        <title>Crystal structure of human phosphomevalonate kinase at 1.8 A resolution.</title>
        <authorList>
            <person name="Chang Q."/>
            <person name="Yan X.-X."/>
            <person name="Gu S.-Y."/>
            <person name="Liu J.-F."/>
            <person name="Liang D.-C."/>
        </authorList>
    </citation>
    <scope>X-RAY CRYSTALLOGRAPHY (1.76 ANGSTROMS)</scope>
    <scope>ATP-BINDING</scope>
    <scope>SUBSTRATE BINDING</scope>
</reference>
<reference key="14">
    <citation type="journal article" date="2015" name="Elife">
        <title>Genomic variations of the mevalonate pathway in porokeratosis.</title>
        <authorList>
            <person name="Zhang Z."/>
            <person name="Li C."/>
            <person name="Wu F."/>
            <person name="Ma R."/>
            <person name="Luan J."/>
            <person name="Yang F."/>
            <person name="Liu W."/>
            <person name="Wang L."/>
            <person name="Zhang S."/>
            <person name="Liu Y."/>
            <person name="Gu J."/>
            <person name="Hua W."/>
            <person name="Fan M."/>
            <person name="Peng H."/>
            <person name="Meng X."/>
            <person name="Song N."/>
            <person name="Bi X."/>
            <person name="Gu C."/>
            <person name="Zhang Z."/>
            <person name="Huang Q."/>
            <person name="Chen L."/>
            <person name="Xiang L."/>
            <person name="Xu J."/>
            <person name="Zheng Z."/>
            <person name="Jiang Z."/>
        </authorList>
    </citation>
    <scope>INVOLVEMENT IN POROK1</scope>
    <scope>VARIANT POROK1 GLU-69</scope>
</reference>
<reference key="15">
    <citation type="journal article" date="2016" name="Sci. Rep.">
        <title>Loss-of-function mutation in PMVK causes autosomal dominant disseminated superficial porokeratosis.</title>
        <authorList>
            <person name="Wang J."/>
            <person name="Liu Y."/>
            <person name="Liu F."/>
            <person name="Huang C."/>
            <person name="Han S."/>
            <person name="Lv Y."/>
            <person name="Liu C.J."/>
            <person name="Zhang S."/>
            <person name="Qin Y."/>
            <person name="Ling L."/>
            <person name="Gao M."/>
            <person name="Yu S."/>
            <person name="Li C."/>
            <person name="Huang M."/>
            <person name="Liao S."/>
            <person name="Hu X."/>
            <person name="Lu Z."/>
            <person name="Liu X."/>
            <person name="Jiang T."/>
            <person name="Tang Z."/>
            <person name="Zhang H."/>
            <person name="Guo A.Y."/>
            <person name="Liu M."/>
        </authorList>
    </citation>
    <scope>VARIANT POROK1 138-ARG--LEU-192 DEL</scope>
    <scope>SUBCELLULAR LOCATION</scope>
</reference>
<name>PMVK_HUMAN</name>
<comment type="function">
    <text evidence="3 4 8 9">Catalyzes the reversible ATP-dependent phosphorylation of mevalonate 5-phosphate to produce mevalonate diphosphate and ADP, a key step in the mevalonic acid mediated biosynthesis of isopentenyl diphosphate and other polyisoprenoid metabolites.</text>
</comment>
<comment type="catalytic activity">
    <reaction evidence="3 4 8 9">
        <text>(R)-5-phosphomevalonate + ATP = (R)-5-diphosphomevalonate + ADP</text>
        <dbReference type="Rhea" id="RHEA:16341"/>
        <dbReference type="ChEBI" id="CHEBI:30616"/>
        <dbReference type="ChEBI" id="CHEBI:57557"/>
        <dbReference type="ChEBI" id="CHEBI:58146"/>
        <dbReference type="ChEBI" id="CHEBI:456216"/>
        <dbReference type="EC" id="2.7.4.2"/>
    </reaction>
    <physiologicalReaction direction="left-to-right" evidence="13 16">
        <dbReference type="Rhea" id="RHEA:16342"/>
    </physiologicalReaction>
    <physiologicalReaction direction="right-to-left" evidence="13">
        <dbReference type="Rhea" id="RHEA:16343"/>
    </physiologicalReaction>
</comment>
<comment type="biophysicochemical properties">
    <kinetics>
        <KM evidence="3 9">25 uM for (R)-5-phosphomevalonate</KM>
        <KM evidence="3 9">0.26 mM for ATP</KM>
        <Vmax evidence="3 9">46.4 umol/min/mg enzyme with (R)-5-phosphomevalonate as substrate</Vmax>
        <Vmax evidence="3 9">52.0 umol/min/mg enzyme with ATP as substrate</Vmax>
    </kinetics>
</comment>
<comment type="pathway">
    <text evidence="11">Isoprenoid biosynthesis; isopentenyl diphosphate biosynthesis via mevalonate pathway; isopentenyl diphosphate from (R)-mevalonate: step 2/3.</text>
</comment>
<comment type="subunit">
    <text evidence="3">Monomer.</text>
</comment>
<comment type="interaction">
    <interactant intactId="EBI-1055562">
        <id>Q15126</id>
    </interactant>
    <interactant intactId="EBI-742054">
        <id>Q96D03</id>
        <label>DDIT4L</label>
    </interactant>
    <organismsDiffer>false</organismsDiffer>
    <experiments>3</experiments>
</comment>
<comment type="interaction">
    <interactant intactId="EBI-1055562">
        <id>Q15126</id>
    </interactant>
    <interactant intactId="EBI-12272076">
        <id>Q13360-2</id>
        <label>ZNF177</label>
    </interactant>
    <organismsDiffer>false</organismsDiffer>
    <experiments>3</experiments>
</comment>
<comment type="subcellular location">
    <subcellularLocation>
        <location evidence="1 7">Cytoplasm</location>
        <location evidence="1 7">Cytosol</location>
    </subcellularLocation>
</comment>
<comment type="tissue specificity">
    <text evidence="8">Heart, liver, skeletal muscle, kidney, and pancreas. Lower level in brain, placenta and lung.</text>
</comment>
<comment type="induction">
    <text evidence="1">By sterol.</text>
</comment>
<comment type="disease" evidence="6 7">
    <disease id="DI-04570">
        <name>Porokeratosis 1, multiple types</name>
        <acronym>POROK1</acronym>
        <description>A form of porokeratosis, a disorder of faulty keratinization characterized by one or more atrophic patches surrounded by a distinctive hyperkeratotic ridgelike border called the cornoid lamella. The keratotic lesions can progress to overt cutaneous neoplasms, typically squamous cell carcinomas. Multiple clinical variants of porokeratosis are recognized, including porokeratosis of Mibelli, linear porokeratosis, disseminated superficial actinic porokeratosis, palmoplantar porokeratosis, and punctate porokeratosis. Different clinical presentations can be observed among members of the same family. Individuals expressing more than one variant have also been reported.</description>
        <dbReference type="MIM" id="175800"/>
    </disease>
    <text>The disease is caused by variants affecting the gene represented in this entry.</text>
</comment>
<comment type="caution">
    <text evidence="2 7 12">Was originally thought to be located in the peroxisome (PubMed:10191291). However, was later shown to be cytosolic (PubMed:14729858, PubMed:27052676).</text>
</comment>
<evidence type="ECO:0000269" key="1">
    <source>
    </source>
</evidence>
<evidence type="ECO:0000269" key="2">
    <source>
    </source>
</evidence>
<evidence type="ECO:0000269" key="3">
    <source>
    </source>
</evidence>
<evidence type="ECO:0000269" key="4">
    <source>
    </source>
</evidence>
<evidence type="ECO:0000269" key="5">
    <source>
    </source>
</evidence>
<evidence type="ECO:0000269" key="6">
    <source>
    </source>
</evidence>
<evidence type="ECO:0000269" key="7">
    <source>
    </source>
</evidence>
<evidence type="ECO:0000269" key="8">
    <source>
    </source>
</evidence>
<evidence type="ECO:0000269" key="9">
    <source>
    </source>
</evidence>
<evidence type="ECO:0000269" key="10">
    <source ref="2"/>
</evidence>
<evidence type="ECO:0000305" key="11"/>
<evidence type="ECO:0000305" key="12">
    <source>
    </source>
</evidence>
<evidence type="ECO:0000305" key="13">
    <source>
    </source>
</evidence>
<evidence type="ECO:0000305" key="14">
    <source>
    </source>
</evidence>
<evidence type="ECO:0000305" key="15">
    <source>
    </source>
</evidence>
<evidence type="ECO:0000305" key="16">
    <source>
    </source>
</evidence>
<evidence type="ECO:0007829" key="17">
    <source>
        <dbReference type="PDB" id="3CH4"/>
    </source>
</evidence>
<keyword id="KW-0002">3D-structure</keyword>
<keyword id="KW-0067">ATP-binding</keyword>
<keyword id="KW-0152">Cholesterol biosynthesis</keyword>
<keyword id="KW-0153">Cholesterol metabolism</keyword>
<keyword id="KW-0963">Cytoplasm</keyword>
<keyword id="KW-0225">Disease variant</keyword>
<keyword id="KW-0418">Kinase</keyword>
<keyword id="KW-0444">Lipid biosynthesis</keyword>
<keyword id="KW-0443">Lipid metabolism</keyword>
<keyword id="KW-0547">Nucleotide-binding</keyword>
<keyword id="KW-1267">Proteomics identification</keyword>
<keyword id="KW-1185">Reference proteome</keyword>
<keyword id="KW-0752">Steroid biosynthesis</keyword>
<keyword id="KW-0753">Steroid metabolism</keyword>
<keyword id="KW-0756">Sterol biosynthesis</keyword>
<keyword id="KW-1207">Sterol metabolism</keyword>
<keyword id="KW-0808">Transferase</keyword>
<protein>
    <recommendedName>
        <fullName>Phosphomevalonate kinase</fullName>
        <shortName>PMKase</shortName>
        <shortName>hPMK</shortName>
        <ecNumber evidence="3 4 8 9">2.7.4.2</ecNumber>
    </recommendedName>
</protein>
<sequence>MAPLGGAPRLVLLFSGKRKSGKDFVTEALQSRLGADVCAVLRLSGPLKEQYAQEHGLNFQRLLDTSTYKEAFRKDMIRWGEEKRQADPGFFCRKIVEGISQPIWLVSDTRRVSDIQWFREAYGAVTQTVRVVALEQSRQQRGWVFTPGVDDAESECGLDNFGDFDWVIENHGVEQRLEEQLENLIEFIRSRL</sequence>
<proteinExistence type="evidence at protein level"/>
<gene>
    <name type="primary">PMVK</name>
    <name type="synonym">PMKI</name>
</gene>
<organism>
    <name type="scientific">Homo sapiens</name>
    <name type="common">Human</name>
    <dbReference type="NCBI Taxonomy" id="9606"/>
    <lineage>
        <taxon>Eukaryota</taxon>
        <taxon>Metazoa</taxon>
        <taxon>Chordata</taxon>
        <taxon>Craniata</taxon>
        <taxon>Vertebrata</taxon>
        <taxon>Euteleostomi</taxon>
        <taxon>Mammalia</taxon>
        <taxon>Eutheria</taxon>
        <taxon>Euarchontoglires</taxon>
        <taxon>Primates</taxon>
        <taxon>Haplorrhini</taxon>
        <taxon>Catarrhini</taxon>
        <taxon>Hominidae</taxon>
        <taxon>Homo</taxon>
    </lineage>
</organism>
<dbReference type="EC" id="2.7.4.2" evidence="3 4 8 9"/>
<dbReference type="EMBL" id="L77213">
    <property type="protein sequence ID" value="AAC37593.1"/>
    <property type="molecule type" value="mRNA"/>
</dbReference>
<dbReference type="EMBL" id="BT019976">
    <property type="protein sequence ID" value="AAV38779.1"/>
    <property type="molecule type" value="mRNA"/>
</dbReference>
<dbReference type="EMBL" id="BC006089">
    <property type="protein sequence ID" value="AAH06089.1"/>
    <property type="molecule type" value="mRNA"/>
</dbReference>
<dbReference type="EMBL" id="BC007694">
    <property type="protein sequence ID" value="AAH07694.1"/>
    <property type="molecule type" value="mRNA"/>
</dbReference>
<dbReference type="EMBL" id="AF026069">
    <property type="protein sequence ID" value="AAC60791.1"/>
    <property type="molecule type" value="Genomic_DNA"/>
</dbReference>
<dbReference type="CCDS" id="CCDS1073.1"/>
<dbReference type="RefSeq" id="NP_006547.1">
    <property type="nucleotide sequence ID" value="NM_006556.4"/>
</dbReference>
<dbReference type="PDB" id="3CH4">
    <property type="method" value="X-ray"/>
    <property type="resolution" value="1.76 A"/>
    <property type="chains" value="B=1-192"/>
</dbReference>
<dbReference type="PDBsum" id="3CH4"/>
<dbReference type="SMR" id="Q15126"/>
<dbReference type="BioGRID" id="115897">
    <property type="interactions" value="107"/>
</dbReference>
<dbReference type="FunCoup" id="Q15126">
    <property type="interactions" value="914"/>
</dbReference>
<dbReference type="IntAct" id="Q15126">
    <property type="interactions" value="62"/>
</dbReference>
<dbReference type="MINT" id="Q15126"/>
<dbReference type="STRING" id="9606.ENSP00000357452"/>
<dbReference type="GuidetoPHARMACOLOGY" id="641"/>
<dbReference type="SwissLipids" id="SLP:000001241"/>
<dbReference type="iPTMnet" id="Q15126"/>
<dbReference type="PhosphoSitePlus" id="Q15126"/>
<dbReference type="BioMuta" id="PMVK"/>
<dbReference type="DMDM" id="3024422"/>
<dbReference type="REPRODUCTION-2DPAGE" id="IPI00220648"/>
<dbReference type="jPOST" id="Q15126"/>
<dbReference type="MassIVE" id="Q15126"/>
<dbReference type="PaxDb" id="9606-ENSP00000357452"/>
<dbReference type="PeptideAtlas" id="Q15126"/>
<dbReference type="ProteomicsDB" id="60453"/>
<dbReference type="Pumba" id="Q15126"/>
<dbReference type="Antibodypedia" id="34158">
    <property type="antibodies" value="244 antibodies from 28 providers"/>
</dbReference>
<dbReference type="DNASU" id="10654"/>
<dbReference type="Ensembl" id="ENST00000368467.4">
    <property type="protein sequence ID" value="ENSP00000357452.3"/>
    <property type="gene ID" value="ENSG00000163344.6"/>
</dbReference>
<dbReference type="GeneID" id="10654"/>
<dbReference type="KEGG" id="hsa:10654"/>
<dbReference type="MANE-Select" id="ENST00000368467.4">
    <property type="protein sequence ID" value="ENSP00000357452.3"/>
    <property type="RefSeq nucleotide sequence ID" value="NM_006556.4"/>
    <property type="RefSeq protein sequence ID" value="NP_006547.1"/>
</dbReference>
<dbReference type="AGR" id="HGNC:9141"/>
<dbReference type="CTD" id="10654"/>
<dbReference type="DisGeNET" id="10654"/>
<dbReference type="GeneCards" id="PMVK"/>
<dbReference type="HGNC" id="HGNC:9141">
    <property type="gene designation" value="PMVK"/>
</dbReference>
<dbReference type="HPA" id="ENSG00000163344">
    <property type="expression patterns" value="Low tissue specificity"/>
</dbReference>
<dbReference type="MalaCards" id="PMVK"/>
<dbReference type="MIM" id="175800">
    <property type="type" value="phenotype"/>
</dbReference>
<dbReference type="MIM" id="607622">
    <property type="type" value="gene"/>
</dbReference>
<dbReference type="neXtProt" id="NX_Q15126"/>
<dbReference type="OpenTargets" id="ENSG00000163344"/>
<dbReference type="Orphanet" id="735">
    <property type="disease" value="Porokeratosis of Mibelli"/>
</dbReference>
<dbReference type="PharmGKB" id="PA33465"/>
<dbReference type="VEuPathDB" id="HostDB:ENSG00000163344"/>
<dbReference type="eggNOG" id="ENOG502QYPQ">
    <property type="taxonomic scope" value="Eukaryota"/>
</dbReference>
<dbReference type="GeneTree" id="ENSGT00390000014801"/>
<dbReference type="HOGENOM" id="CLU_092097_0_0_1"/>
<dbReference type="InParanoid" id="Q15126"/>
<dbReference type="OMA" id="YGFFCRA"/>
<dbReference type="OrthoDB" id="2401875at2759"/>
<dbReference type="PAN-GO" id="Q15126">
    <property type="GO annotations" value="3 GO annotations based on evolutionary models"/>
</dbReference>
<dbReference type="PhylomeDB" id="Q15126"/>
<dbReference type="TreeFam" id="TF312935"/>
<dbReference type="BioCyc" id="MetaCyc:HS08830-MONOMER"/>
<dbReference type="BRENDA" id="2.7.4.2">
    <property type="organism ID" value="2681"/>
</dbReference>
<dbReference type="PathwayCommons" id="Q15126"/>
<dbReference type="Reactome" id="R-HSA-191273">
    <property type="pathway name" value="Cholesterol biosynthesis"/>
</dbReference>
<dbReference type="Reactome" id="R-HSA-2426168">
    <property type="pathway name" value="Activation of gene expression by SREBF (SREBP)"/>
</dbReference>
<dbReference type="SABIO-RK" id="Q15126"/>
<dbReference type="SignaLink" id="Q15126"/>
<dbReference type="UniPathway" id="UPA00057">
    <property type="reaction ID" value="UER00099"/>
</dbReference>
<dbReference type="BioGRID-ORCS" id="10654">
    <property type="hits" value="316 hits in 1165 CRISPR screens"/>
</dbReference>
<dbReference type="CD-CODE" id="FB4E32DD">
    <property type="entry name" value="Presynaptic clusters and postsynaptic densities"/>
</dbReference>
<dbReference type="ChiTaRS" id="PMVK">
    <property type="organism name" value="human"/>
</dbReference>
<dbReference type="EvolutionaryTrace" id="Q15126"/>
<dbReference type="GenomeRNAi" id="10654"/>
<dbReference type="Pharos" id="Q15126">
    <property type="development level" value="Tchem"/>
</dbReference>
<dbReference type="PRO" id="PR:Q15126"/>
<dbReference type="Proteomes" id="UP000005640">
    <property type="component" value="Chromosome 1"/>
</dbReference>
<dbReference type="RNAct" id="Q15126">
    <property type="molecule type" value="protein"/>
</dbReference>
<dbReference type="Bgee" id="ENSG00000163344">
    <property type="expression patterns" value="Expressed in apex of heart and 201 other cell types or tissues"/>
</dbReference>
<dbReference type="ExpressionAtlas" id="Q15126">
    <property type="expression patterns" value="baseline and differential"/>
</dbReference>
<dbReference type="GO" id="GO:0005829">
    <property type="term" value="C:cytosol"/>
    <property type="evidence" value="ECO:0000314"/>
    <property type="project" value="UniProtKB"/>
</dbReference>
<dbReference type="GO" id="GO:0070062">
    <property type="term" value="C:extracellular exosome"/>
    <property type="evidence" value="ECO:0007005"/>
    <property type="project" value="UniProtKB"/>
</dbReference>
<dbReference type="GO" id="GO:0016020">
    <property type="term" value="C:membrane"/>
    <property type="evidence" value="ECO:0007005"/>
    <property type="project" value="UniProtKB"/>
</dbReference>
<dbReference type="GO" id="GO:0005777">
    <property type="term" value="C:peroxisome"/>
    <property type="evidence" value="ECO:0000314"/>
    <property type="project" value="UniProtKB"/>
</dbReference>
<dbReference type="GO" id="GO:0005524">
    <property type="term" value="F:ATP binding"/>
    <property type="evidence" value="ECO:0000314"/>
    <property type="project" value="UniProtKB"/>
</dbReference>
<dbReference type="GO" id="GO:0004631">
    <property type="term" value="F:phosphomevalonate kinase activity"/>
    <property type="evidence" value="ECO:0000314"/>
    <property type="project" value="UniProtKB"/>
</dbReference>
<dbReference type="GO" id="GO:0006695">
    <property type="term" value="P:cholesterol biosynthetic process"/>
    <property type="evidence" value="ECO:0000314"/>
    <property type="project" value="UniProtKB"/>
</dbReference>
<dbReference type="GO" id="GO:0019287">
    <property type="term" value="P:isopentenyl diphosphate biosynthetic process, mevalonate pathway"/>
    <property type="evidence" value="ECO:0000318"/>
    <property type="project" value="GO_Central"/>
</dbReference>
<dbReference type="GO" id="GO:0070723">
    <property type="term" value="P:response to cholesterol"/>
    <property type="evidence" value="ECO:0000270"/>
    <property type="project" value="UniProtKB"/>
</dbReference>
<dbReference type="GO" id="GO:0016126">
    <property type="term" value="P:sterol biosynthetic process"/>
    <property type="evidence" value="ECO:0000314"/>
    <property type="project" value="UniProtKB"/>
</dbReference>
<dbReference type="FunFam" id="3.40.50.300:FF:001026">
    <property type="entry name" value="Phosphomevalonate kinase"/>
    <property type="match status" value="1"/>
</dbReference>
<dbReference type="Gene3D" id="3.40.50.300">
    <property type="entry name" value="P-loop containing nucleotide triphosphate hydrolases"/>
    <property type="match status" value="1"/>
</dbReference>
<dbReference type="InterPro" id="IPR027417">
    <property type="entry name" value="P-loop_NTPase"/>
</dbReference>
<dbReference type="InterPro" id="IPR005919">
    <property type="entry name" value="Pmev_kin_anim"/>
</dbReference>
<dbReference type="NCBIfam" id="TIGR01223">
    <property type="entry name" value="Pmev_kin_anim"/>
    <property type="match status" value="1"/>
</dbReference>
<dbReference type="PANTHER" id="PTHR13101">
    <property type="entry name" value="PHOSPHOMEVALONATE KINASE"/>
    <property type="match status" value="1"/>
</dbReference>
<dbReference type="PANTHER" id="PTHR13101:SF1">
    <property type="entry name" value="PHOSPHOMEVALONATE KINASE"/>
    <property type="match status" value="1"/>
</dbReference>
<dbReference type="Pfam" id="PF04275">
    <property type="entry name" value="P-mevalo_kinase"/>
    <property type="match status" value="1"/>
</dbReference>
<dbReference type="PIRSF" id="PIRSF036639">
    <property type="entry name" value="PMK_anim"/>
    <property type="match status" value="1"/>
</dbReference>
<dbReference type="SUPFAM" id="SSF52540">
    <property type="entry name" value="P-loop containing nucleoside triphosphate hydrolases"/>
    <property type="match status" value="1"/>
</dbReference>
<accession>Q15126</accession>
<accession>Q5TZW9</accession>
<feature type="chain" id="PRO_0000058472" description="Phosphomevalonate kinase">
    <location>
        <begin position="1"/>
        <end position="192"/>
    </location>
</feature>
<feature type="binding site" evidence="13 15">
    <location>
        <begin position="17"/>
        <end position="23"/>
    </location>
    <ligand>
        <name>ATP</name>
        <dbReference type="ChEBI" id="CHEBI:30616"/>
    </ligand>
</feature>
<feature type="binding site" evidence="14 15">
    <location>
        <position position="141"/>
    </location>
    <ligand>
        <name>ATP</name>
        <dbReference type="ChEBI" id="CHEBI:30616"/>
    </ligand>
</feature>
<feature type="binding site" evidence="5">
    <location>
        <position position="170"/>
    </location>
    <ligand>
        <name>substrate</name>
    </ligand>
</feature>
<feature type="binding site" evidence="15">
    <location>
        <position position="171"/>
    </location>
    <ligand>
        <name>ATP</name>
        <dbReference type="ChEBI" id="CHEBI:30616"/>
    </ligand>
</feature>
<feature type="binding site" evidence="15">
    <location>
        <position position="176"/>
    </location>
    <ligand>
        <name>ATP</name>
        <dbReference type="ChEBI" id="CHEBI:30616"/>
    </ligand>
</feature>
<feature type="binding site" evidence="15">
    <location>
        <position position="180"/>
    </location>
    <ligand>
        <name>ATP</name>
        <dbReference type="ChEBI" id="CHEBI:30616"/>
    </ligand>
</feature>
<feature type="sequence variant" id="VAR_075051" description="In POROK1; uncertain significance." evidence="6">
    <original>K</original>
    <variation>E</variation>
    <location>
        <position position="69"/>
    </location>
</feature>
<feature type="sequence variant" id="VAR_051283" description="In dbSNP:rs16836525." evidence="10">
    <original>V</original>
    <variation>M</variation>
    <location>
        <position position="125"/>
    </location>
</feature>
<feature type="sequence variant" id="VAR_080138" description="In POROK1; results in reduced expression and solubility; disturbs subcellular localization with punctate rather than diffuse cytoplasmic distribution." evidence="7">
    <location>
        <begin position="138"/>
        <end position="192"/>
    </location>
</feature>
<feature type="mutagenesis site" description="Approximately 8-fold decrease in Vmax for MgATP and R-MVP. Approximately 5-fold increase in KM for MgATP and R-MVP." evidence="3">
    <original>K</original>
    <variation>M</variation>
    <location>
        <position position="17"/>
    </location>
</feature>
<feature type="mutagenesis site" description="Approximately 85-fold decrease in Vmax for MgATP and R-MVP. Approximately 5-fold increase in KM for MgATP and R-MVP." evidence="3">
    <original>R</original>
    <variation>Q</variation>
    <location>
        <position position="18"/>
    </location>
</feature>
<feature type="mutagenesis site" description="Approximately 9-fold decrease in Vmax for MgATP and R-MVP. Approximately 10-fold increase in KM for MgATP and R-MVP." evidence="3">
    <original>K</original>
    <variation>M</variation>
    <location>
        <position position="19"/>
    </location>
</feature>
<feature type="mutagenesis site" description="Approximately 100000-fold decrease in Vmax for MgATP." evidence="3">
    <original>K</original>
    <variation>M</variation>
    <location>
        <position position="22"/>
    </location>
</feature>
<feature type="mutagenesis site" description="Approximately 7-fold decrease in Vmax for MgATP and R-MVP. Approximately 10-fold increase in KM for MgATP and 5-fold increase in KM for R-MVP." evidence="3">
    <original>D</original>
    <variation>N</variation>
    <location>
        <position position="23"/>
    </location>
</feature>
<feature type="mutagenesis site" description="Approximately 1400-fold decrease in Vmax for MgATP and R-MVP. Approximately 3-fold increase in KM for MgATP and R-MVP." evidence="4">
    <original>K</original>
    <variation>M</variation>
    <location>
        <position position="48"/>
    </location>
</feature>
<feature type="mutagenesis site" description="Approximately 500-fold decrease in Vmax for MgATP and R-MVP. Approximately 3-fold increase in KM for MgATP and R-MVP." evidence="4">
    <original>K</original>
    <variation>M</variation>
    <location>
        <position position="69"/>
    </location>
</feature>
<feature type="mutagenesis site" description="Approximately 3000-fold decrease in Vmax for MgATP and R-MVP. No change in KM for MgATP and approximately 3-fold increase in KM for R-MVP." evidence="4">
    <original>R</original>
    <variation>M</variation>
    <location>
        <position position="73"/>
    </location>
</feature>
<feature type="mutagenesis site" description="Approximately 10-fold decrease in Vmax for MgATP and R-MVP. Approximately 3-fold increase in KM for MgATP and 50-fold increase in KM for R-MVP." evidence="4">
    <original>R</original>
    <variation>M</variation>
    <location>
        <position position="84"/>
    </location>
</feature>
<feature type="mutagenesis site" description="Almost no change in KM and Vmax for MgATP and R-MVP.">
    <original>R</original>
    <variation>M</variation>
    <location>
        <position position="93"/>
    </location>
</feature>
<feature type="mutagenesis site" description="Approximately 20000-fold decrease in Vmax for MgATP." evidence="4">
    <original>R</original>
    <variation>M</variation>
    <location>
        <position position="110"/>
    </location>
</feature>
<feature type="mutagenesis site" description="Approximately 65-fold decrease in Vmax for MgATP and R-MVP. Approximately 8-fold increase in KM for MgATP and 60-fold increase in KM for R-MVP." evidence="4">
    <original>R</original>
    <variation>M</variation>
    <location>
        <position position="111"/>
    </location>
</feature>
<feature type="mutagenesis site" description="Approximately 4-fold decrease in Vmax for MgATP and R-MVP. Approximately 3-fold increase in KM for MgATP and R-MVP.">
    <original>R</original>
    <variation>M</variation>
    <location>
        <position position="130"/>
    </location>
</feature>
<feature type="mutagenesis site" description="Approximately 3-fold decrease in Vmax for MgATP and R-MVP. Approximately 5-fold increase in KM for MgATP and no change in KM for R-MVP.">
    <original>R</original>
    <variation>M</variation>
    <location>
        <position position="138"/>
    </location>
</feature>
<feature type="mutagenesis site" description="Approximately 15-fold decrease in Vmax for MgATP and R-MVP. Approximately 50-fold increase in KM for MgATP and approximately 7-fold in KM for R-MVP." evidence="4">
    <original>R</original>
    <variation>M</variation>
    <location>
        <position position="141"/>
    </location>
</feature>
<feature type="strand" evidence="17">
    <location>
        <begin position="9"/>
        <end position="16"/>
    </location>
</feature>
<feature type="helix" evidence="17">
    <location>
        <begin position="22"/>
        <end position="33"/>
    </location>
</feature>
<feature type="turn" evidence="17">
    <location>
        <begin position="35"/>
        <end position="37"/>
    </location>
</feature>
<feature type="strand" evidence="17">
    <location>
        <begin position="38"/>
        <end position="41"/>
    </location>
</feature>
<feature type="helix" evidence="17">
    <location>
        <begin position="44"/>
        <end position="53"/>
    </location>
</feature>
<feature type="turn" evidence="17">
    <location>
        <begin position="54"/>
        <end position="56"/>
    </location>
</feature>
<feature type="helix" evidence="17">
    <location>
        <begin position="72"/>
        <end position="86"/>
    </location>
</feature>
<feature type="turn" evidence="17">
    <location>
        <begin position="88"/>
        <end position="91"/>
    </location>
</feature>
<feature type="helix" evidence="17">
    <location>
        <begin position="92"/>
        <end position="95"/>
    </location>
</feature>
<feature type="strand" evidence="17">
    <location>
        <begin position="102"/>
        <end position="106"/>
    </location>
</feature>
<feature type="helix" evidence="17">
    <location>
        <begin position="112"/>
        <end position="122"/>
    </location>
</feature>
<feature type="helix" evidence="17">
    <location>
        <begin position="123"/>
        <end position="125"/>
    </location>
</feature>
<feature type="strand" evidence="17">
    <location>
        <begin position="126"/>
        <end position="133"/>
    </location>
</feature>
<feature type="helix" evidence="17">
    <location>
        <begin position="135"/>
        <end position="140"/>
    </location>
</feature>
<feature type="turn" evidence="17">
    <location>
        <begin position="147"/>
        <end position="151"/>
    </location>
</feature>
<feature type="helix" evidence="17">
    <location>
        <begin position="153"/>
        <end position="156"/>
    </location>
</feature>
<feature type="turn" evidence="17">
    <location>
        <begin position="157"/>
        <end position="160"/>
    </location>
</feature>
<feature type="strand" evidence="17">
    <location>
        <begin position="165"/>
        <end position="170"/>
    </location>
</feature>
<feature type="helix" evidence="17">
    <location>
        <begin position="174"/>
        <end position="189"/>
    </location>
</feature>